<proteinExistence type="inferred from homology"/>
<comment type="function">
    <text evidence="1">Involved in the biosynthesis of isoprenoids. Catalyzes the 1,3-allylic rearrangement of the homoallylic substrate isopentenyl (IPP) to its allylic isomer, dimethylallyl diphosphate (DMAPP).</text>
</comment>
<comment type="catalytic activity">
    <reaction evidence="1">
        <text>isopentenyl diphosphate = dimethylallyl diphosphate</text>
        <dbReference type="Rhea" id="RHEA:23284"/>
        <dbReference type="ChEBI" id="CHEBI:57623"/>
        <dbReference type="ChEBI" id="CHEBI:128769"/>
        <dbReference type="EC" id="5.3.3.2"/>
    </reaction>
</comment>
<comment type="cofactor">
    <cofactor evidence="1">
        <name>FMN</name>
        <dbReference type="ChEBI" id="CHEBI:58210"/>
    </cofactor>
</comment>
<comment type="cofactor">
    <cofactor evidence="1">
        <name>NADPH</name>
        <dbReference type="ChEBI" id="CHEBI:57783"/>
    </cofactor>
</comment>
<comment type="cofactor">
    <cofactor evidence="1">
        <name>Mg(2+)</name>
        <dbReference type="ChEBI" id="CHEBI:18420"/>
    </cofactor>
</comment>
<comment type="subunit">
    <text evidence="1">Homooctamer. Dimer of tetramers.</text>
</comment>
<comment type="subcellular location">
    <subcellularLocation>
        <location evidence="1">Cytoplasm</location>
    </subcellularLocation>
</comment>
<comment type="similarity">
    <text evidence="1">Belongs to the IPP isomerase type 2 family.</text>
</comment>
<keyword id="KW-0963">Cytoplasm</keyword>
<keyword id="KW-0285">Flavoprotein</keyword>
<keyword id="KW-0288">FMN</keyword>
<keyword id="KW-0413">Isomerase</keyword>
<keyword id="KW-0414">Isoprene biosynthesis</keyword>
<keyword id="KW-0460">Magnesium</keyword>
<keyword id="KW-0479">Metal-binding</keyword>
<keyword id="KW-0521">NADP</keyword>
<feature type="chain" id="PRO_0000134426" description="Isopentenyl-diphosphate delta-isomerase">
    <location>
        <begin position="1"/>
        <end position="349"/>
    </location>
</feature>
<feature type="binding site" evidence="1">
    <location>
        <begin position="9"/>
        <end position="10"/>
    </location>
    <ligand>
        <name>substrate</name>
    </ligand>
</feature>
<feature type="binding site" evidence="1">
    <location>
        <begin position="65"/>
        <end position="67"/>
    </location>
    <ligand>
        <name>FMN</name>
        <dbReference type="ChEBI" id="CHEBI:58210"/>
    </ligand>
</feature>
<feature type="binding site" evidence="1">
    <location>
        <begin position="95"/>
        <end position="97"/>
    </location>
    <ligand>
        <name>substrate</name>
    </ligand>
</feature>
<feature type="binding site" evidence="1">
    <location>
        <position position="95"/>
    </location>
    <ligand>
        <name>FMN</name>
        <dbReference type="ChEBI" id="CHEBI:58210"/>
    </ligand>
</feature>
<feature type="binding site" evidence="1">
    <location>
        <position position="124"/>
    </location>
    <ligand>
        <name>FMN</name>
        <dbReference type="ChEBI" id="CHEBI:58210"/>
    </ligand>
</feature>
<feature type="binding site" evidence="1">
    <location>
        <position position="154"/>
    </location>
    <ligand>
        <name>substrate</name>
    </ligand>
</feature>
<feature type="binding site" evidence="1">
    <location>
        <position position="155"/>
    </location>
    <ligand>
        <name>Mg(2+)</name>
        <dbReference type="ChEBI" id="CHEBI:18420"/>
    </ligand>
</feature>
<feature type="binding site" evidence="1">
    <location>
        <position position="186"/>
    </location>
    <ligand>
        <name>FMN</name>
        <dbReference type="ChEBI" id="CHEBI:58210"/>
    </ligand>
</feature>
<feature type="binding site" evidence="1">
    <location>
        <position position="211"/>
    </location>
    <ligand>
        <name>FMN</name>
        <dbReference type="ChEBI" id="CHEBI:58210"/>
    </ligand>
</feature>
<feature type="binding site" evidence="1">
    <location>
        <position position="216"/>
    </location>
    <ligand>
        <name>FMN</name>
        <dbReference type="ChEBI" id="CHEBI:58210"/>
    </ligand>
</feature>
<feature type="binding site" evidence="1">
    <location>
        <begin position="262"/>
        <end position="264"/>
    </location>
    <ligand>
        <name>FMN</name>
        <dbReference type="ChEBI" id="CHEBI:58210"/>
    </ligand>
</feature>
<feature type="binding site" evidence="1">
    <location>
        <begin position="283"/>
        <end position="284"/>
    </location>
    <ligand>
        <name>FMN</name>
        <dbReference type="ChEBI" id="CHEBI:58210"/>
    </ligand>
</feature>
<reference key="1">
    <citation type="journal article" date="2002" name="Lancet">
        <title>Genome and virulence determinants of high virulence community-acquired MRSA.</title>
        <authorList>
            <person name="Baba T."/>
            <person name="Takeuchi F."/>
            <person name="Kuroda M."/>
            <person name="Yuzawa H."/>
            <person name="Aoki K."/>
            <person name="Oguchi A."/>
            <person name="Nagai Y."/>
            <person name="Iwama N."/>
            <person name="Asano K."/>
            <person name="Naimi T."/>
            <person name="Kuroda H."/>
            <person name="Cui L."/>
            <person name="Yamamoto K."/>
            <person name="Hiramatsu K."/>
        </authorList>
    </citation>
    <scope>NUCLEOTIDE SEQUENCE [LARGE SCALE GENOMIC DNA]</scope>
    <source>
        <strain>MW2</strain>
    </source>
</reference>
<gene>
    <name evidence="1" type="primary">fni</name>
    <name type="ordered locus">MW2267</name>
</gene>
<accession>Q8NV55</accession>
<dbReference type="EC" id="5.3.3.2" evidence="1"/>
<dbReference type="EMBL" id="BA000033">
    <property type="protein sequence ID" value="BAB96132.1"/>
    <property type="molecule type" value="Genomic_DNA"/>
</dbReference>
<dbReference type="RefSeq" id="WP_001279387.1">
    <property type="nucleotide sequence ID" value="NC_003923.1"/>
</dbReference>
<dbReference type="SMR" id="Q8NV55"/>
<dbReference type="KEGG" id="sam:MW2267"/>
<dbReference type="HOGENOM" id="CLU_065515_0_0_9"/>
<dbReference type="GO" id="GO:0005737">
    <property type="term" value="C:cytoplasm"/>
    <property type="evidence" value="ECO:0007669"/>
    <property type="project" value="UniProtKB-SubCell"/>
</dbReference>
<dbReference type="GO" id="GO:0010181">
    <property type="term" value="F:FMN binding"/>
    <property type="evidence" value="ECO:0007669"/>
    <property type="project" value="UniProtKB-UniRule"/>
</dbReference>
<dbReference type="GO" id="GO:0004452">
    <property type="term" value="F:isopentenyl-diphosphate delta-isomerase activity"/>
    <property type="evidence" value="ECO:0007669"/>
    <property type="project" value="UniProtKB-UniRule"/>
</dbReference>
<dbReference type="GO" id="GO:0000287">
    <property type="term" value="F:magnesium ion binding"/>
    <property type="evidence" value="ECO:0007669"/>
    <property type="project" value="UniProtKB-UniRule"/>
</dbReference>
<dbReference type="GO" id="GO:0070402">
    <property type="term" value="F:NADPH binding"/>
    <property type="evidence" value="ECO:0007669"/>
    <property type="project" value="UniProtKB-UniRule"/>
</dbReference>
<dbReference type="GO" id="GO:0016491">
    <property type="term" value="F:oxidoreductase activity"/>
    <property type="evidence" value="ECO:0007669"/>
    <property type="project" value="InterPro"/>
</dbReference>
<dbReference type="GO" id="GO:0008299">
    <property type="term" value="P:isoprenoid biosynthetic process"/>
    <property type="evidence" value="ECO:0007669"/>
    <property type="project" value="UniProtKB-UniRule"/>
</dbReference>
<dbReference type="CDD" id="cd02811">
    <property type="entry name" value="IDI-2_FMN"/>
    <property type="match status" value="1"/>
</dbReference>
<dbReference type="Gene3D" id="3.20.20.70">
    <property type="entry name" value="Aldolase class I"/>
    <property type="match status" value="1"/>
</dbReference>
<dbReference type="HAMAP" id="MF_00354">
    <property type="entry name" value="Idi_2"/>
    <property type="match status" value="1"/>
</dbReference>
<dbReference type="InterPro" id="IPR013785">
    <property type="entry name" value="Aldolase_TIM"/>
</dbReference>
<dbReference type="InterPro" id="IPR000262">
    <property type="entry name" value="FMN-dep_DH"/>
</dbReference>
<dbReference type="InterPro" id="IPR011179">
    <property type="entry name" value="IPdP_isomerase"/>
</dbReference>
<dbReference type="NCBIfam" id="TIGR02151">
    <property type="entry name" value="IPP_isom_2"/>
    <property type="match status" value="1"/>
</dbReference>
<dbReference type="PANTHER" id="PTHR43665">
    <property type="entry name" value="ISOPENTENYL-DIPHOSPHATE DELTA-ISOMERASE"/>
    <property type="match status" value="1"/>
</dbReference>
<dbReference type="PANTHER" id="PTHR43665:SF1">
    <property type="entry name" value="ISOPENTENYL-DIPHOSPHATE DELTA-ISOMERASE"/>
    <property type="match status" value="1"/>
</dbReference>
<dbReference type="Pfam" id="PF01070">
    <property type="entry name" value="FMN_dh"/>
    <property type="match status" value="1"/>
</dbReference>
<dbReference type="PIRSF" id="PIRSF003314">
    <property type="entry name" value="IPP_isomerase"/>
    <property type="match status" value="1"/>
</dbReference>
<dbReference type="SUPFAM" id="SSF51395">
    <property type="entry name" value="FMN-linked oxidoreductases"/>
    <property type="match status" value="1"/>
</dbReference>
<sequence length="349" mass="38769">MSDFQREQRKNEHVEIAMAQSDAMYSDFDKMRFVHHSIPSINVNDIDLTSQTPDLTMAYPVYINAMTGGSEWTKNINEKLAVVARETGLAMAVGSTHAALRNPRMAETFTIARKMNPEGMIFSNVGADVPVEKALEAVELLEAQALQIHVNSPQELVMPEGNREFVTWLDNIASIVSRVSVPVIIKEVGFGMSKELMHDLQQIGVKYVDVSGKGGTNFVDIENERRANKDMDYLSSWGQSTVESLLETTAYQSEISVFASGGLRTPLDAIKSLALGAKATGMSRPFLNQVENNGIAHTVAYVESFIEHMKSIMTMLDAKNIDDLTQKQIVFSPEILSWIEQRSLNIHRG</sequence>
<name>IDI2_STAAW</name>
<protein>
    <recommendedName>
        <fullName evidence="1">Isopentenyl-diphosphate delta-isomerase</fullName>
        <shortName evidence="1">IPP isomerase</shortName>
        <ecNumber evidence="1">5.3.3.2</ecNumber>
    </recommendedName>
    <alternativeName>
        <fullName evidence="1">Isopentenyl diphosphate:dimethylallyl diphosphate isomerase</fullName>
    </alternativeName>
    <alternativeName>
        <fullName evidence="1">Isopentenyl pyrophosphate isomerase</fullName>
    </alternativeName>
    <alternativeName>
        <fullName evidence="1">Type 2 isopentenyl diphosphate isomerase</fullName>
        <shortName evidence="1">IDI-2</shortName>
    </alternativeName>
</protein>
<evidence type="ECO:0000255" key="1">
    <source>
        <dbReference type="HAMAP-Rule" id="MF_00354"/>
    </source>
</evidence>
<organism>
    <name type="scientific">Staphylococcus aureus (strain MW2)</name>
    <dbReference type="NCBI Taxonomy" id="196620"/>
    <lineage>
        <taxon>Bacteria</taxon>
        <taxon>Bacillati</taxon>
        <taxon>Bacillota</taxon>
        <taxon>Bacilli</taxon>
        <taxon>Bacillales</taxon>
        <taxon>Staphylococcaceae</taxon>
        <taxon>Staphylococcus</taxon>
    </lineage>
</organism>